<gene>
    <name type="primary">PME6</name>
    <name type="synonym">ARATH6</name>
    <name type="ordered locus">At1g23200</name>
    <name type="ORF">T26J12.4</name>
</gene>
<sequence>MDHKILLTPPKSLYTKCIITIIYVVSISHLNAHFITSCKQTPYPSVCDHHMSNSPLKTLDDQTDGFTFHDLVVSSTMDQAVQLHRLVSSLKQHHSLHKHATSALFDCLELYEDTIDQLNHSRRSYGQYSSPHDRQTSLSAAIANQDTCRNGFRDFKLTSSYSKYFPVQFHRNLTKSISNSLAVTKAAAEAEAVAEKYPSTGFTKFSKQRSSAGGGSHRRLLLFSDEKFPSWFPLSDRKLLEDSKTTAKADLVVAKDGSGHYTSIQQAVNAAAKLPRRNQRLVIYVKAGVYRENVVIKKSIKNVMVIGDGIDSTIVTGNRNVQDGTTTFRSATFAVSGNGFIAQGITFENTAGPEKHQAVALRSSSDFSVFYACSFKGYQDTLYLHSSRQFLRNCNIYGTVDFIFGDATAILQNCNIYARKPMSGQKNTITAQSRKEPDETTGFVIQSSTVATASETYLGRPWRSHSRTVFMKCNLGALVSPAGWLPWSGSFALSTLYYGEYGNTGAGASVSGRVKWPGYHVIKTVTEAEKFTVENFLDGNYWITATGVPVNDGL</sequence>
<dbReference type="EC" id="3.1.1.11"/>
<dbReference type="EMBL" id="AC002311">
    <property type="protein sequence ID" value="AAC00600.1"/>
    <property type="molecule type" value="Genomic_DNA"/>
</dbReference>
<dbReference type="EMBL" id="AC005292">
    <property type="protein sequence ID" value="AAF86993.1"/>
    <property type="molecule type" value="Genomic_DNA"/>
</dbReference>
<dbReference type="EMBL" id="CP002684">
    <property type="protein sequence ID" value="AEE30354.1"/>
    <property type="molecule type" value="Genomic_DNA"/>
</dbReference>
<dbReference type="EMBL" id="AY065263">
    <property type="protein sequence ID" value="AAL38739.1"/>
    <property type="molecule type" value="mRNA"/>
</dbReference>
<dbReference type="EMBL" id="AY091325">
    <property type="protein sequence ID" value="AAM14264.1"/>
    <property type="molecule type" value="mRNA"/>
</dbReference>
<dbReference type="EMBL" id="AK227025">
    <property type="protein sequence ID" value="BAE99088.1"/>
    <property type="molecule type" value="mRNA"/>
</dbReference>
<dbReference type="PIR" id="C86366">
    <property type="entry name" value="C86366"/>
</dbReference>
<dbReference type="RefSeq" id="NP_173733.1">
    <property type="nucleotide sequence ID" value="NM_102168.4"/>
</dbReference>
<dbReference type="SMR" id="O49298"/>
<dbReference type="FunCoup" id="O49298">
    <property type="interactions" value="90"/>
</dbReference>
<dbReference type="STRING" id="3702.O49298"/>
<dbReference type="GlyCosmos" id="O49298">
    <property type="glycosylation" value="2 sites, No reported glycans"/>
</dbReference>
<dbReference type="GlyGen" id="O49298">
    <property type="glycosylation" value="2 sites"/>
</dbReference>
<dbReference type="iPTMnet" id="O49298"/>
<dbReference type="PaxDb" id="3702-AT1G23200.1"/>
<dbReference type="ProteomicsDB" id="226273"/>
<dbReference type="EnsemblPlants" id="AT1G23200.1">
    <property type="protein sequence ID" value="AT1G23200.1"/>
    <property type="gene ID" value="AT1G23200"/>
</dbReference>
<dbReference type="GeneID" id="838928"/>
<dbReference type="Gramene" id="AT1G23200.1">
    <property type="protein sequence ID" value="AT1G23200.1"/>
    <property type="gene ID" value="AT1G23200"/>
</dbReference>
<dbReference type="KEGG" id="ath:AT1G23200"/>
<dbReference type="Araport" id="AT1G23200"/>
<dbReference type="TAIR" id="AT1G23200">
    <property type="gene designation" value="HMS"/>
</dbReference>
<dbReference type="eggNOG" id="ENOG502QTQV">
    <property type="taxonomic scope" value="Eukaryota"/>
</dbReference>
<dbReference type="HOGENOM" id="CLU_012243_9_1_1"/>
<dbReference type="InParanoid" id="O49298"/>
<dbReference type="OMA" id="HFITSCK"/>
<dbReference type="OrthoDB" id="2019149at2759"/>
<dbReference type="PhylomeDB" id="O49298"/>
<dbReference type="BioCyc" id="ARA:AT1G23200-MONOMER"/>
<dbReference type="BRENDA" id="3.1.1.11">
    <property type="organism ID" value="399"/>
</dbReference>
<dbReference type="UniPathway" id="UPA00545">
    <property type="reaction ID" value="UER00823"/>
</dbReference>
<dbReference type="PRO" id="PR:O49298"/>
<dbReference type="Proteomes" id="UP000006548">
    <property type="component" value="Chromosome 1"/>
</dbReference>
<dbReference type="ExpressionAtlas" id="O49298">
    <property type="expression patterns" value="baseline and differential"/>
</dbReference>
<dbReference type="GO" id="GO:0005576">
    <property type="term" value="C:extracellular region"/>
    <property type="evidence" value="ECO:0007669"/>
    <property type="project" value="UniProtKB-KW"/>
</dbReference>
<dbReference type="GO" id="GO:0004857">
    <property type="term" value="F:enzyme inhibitor activity"/>
    <property type="evidence" value="ECO:0007669"/>
    <property type="project" value="InterPro"/>
</dbReference>
<dbReference type="GO" id="GO:0030599">
    <property type="term" value="F:pectinesterase activity"/>
    <property type="evidence" value="ECO:0000315"/>
    <property type="project" value="TAIR"/>
</dbReference>
<dbReference type="GO" id="GO:0042545">
    <property type="term" value="P:cell wall modification"/>
    <property type="evidence" value="ECO:0007669"/>
    <property type="project" value="InterPro"/>
</dbReference>
<dbReference type="GO" id="GO:0045490">
    <property type="term" value="P:pectin catabolic process"/>
    <property type="evidence" value="ECO:0007669"/>
    <property type="project" value="UniProtKB-UniPathway"/>
</dbReference>
<dbReference type="CDD" id="cd15798">
    <property type="entry name" value="PMEI-like_3"/>
    <property type="match status" value="1"/>
</dbReference>
<dbReference type="FunFam" id="2.160.20.10:FF:000001">
    <property type="entry name" value="Pectinesterase"/>
    <property type="match status" value="1"/>
</dbReference>
<dbReference type="Gene3D" id="1.20.140.40">
    <property type="entry name" value="Invertase/pectin methylesterase inhibitor family protein"/>
    <property type="match status" value="1"/>
</dbReference>
<dbReference type="Gene3D" id="2.160.20.10">
    <property type="entry name" value="Single-stranded right-handed beta-helix, Pectin lyase-like"/>
    <property type="match status" value="1"/>
</dbReference>
<dbReference type="InterPro" id="IPR035513">
    <property type="entry name" value="Invertase/methylesterase_inhib"/>
</dbReference>
<dbReference type="InterPro" id="IPR012334">
    <property type="entry name" value="Pectin_lyas_fold"/>
</dbReference>
<dbReference type="InterPro" id="IPR011050">
    <property type="entry name" value="Pectin_lyase_fold/virulence"/>
</dbReference>
<dbReference type="InterPro" id="IPR033131">
    <property type="entry name" value="Pectinesterase_Asp_AS"/>
</dbReference>
<dbReference type="InterPro" id="IPR000070">
    <property type="entry name" value="Pectinesterase_cat"/>
</dbReference>
<dbReference type="InterPro" id="IPR006501">
    <property type="entry name" value="Pectinesterase_inhib_dom"/>
</dbReference>
<dbReference type="NCBIfam" id="TIGR01614">
    <property type="entry name" value="PME_inhib"/>
    <property type="match status" value="1"/>
</dbReference>
<dbReference type="PANTHER" id="PTHR31707">
    <property type="entry name" value="PECTINESTERASE"/>
    <property type="match status" value="1"/>
</dbReference>
<dbReference type="Pfam" id="PF01095">
    <property type="entry name" value="Pectinesterase"/>
    <property type="match status" value="1"/>
</dbReference>
<dbReference type="Pfam" id="PF04043">
    <property type="entry name" value="PMEI"/>
    <property type="match status" value="1"/>
</dbReference>
<dbReference type="SMART" id="SM00856">
    <property type="entry name" value="PMEI"/>
    <property type="match status" value="1"/>
</dbReference>
<dbReference type="SUPFAM" id="SSF51126">
    <property type="entry name" value="Pectin lyase-like"/>
    <property type="match status" value="1"/>
</dbReference>
<dbReference type="SUPFAM" id="SSF101148">
    <property type="entry name" value="Plant invertase/pectin methylesterase inhibitor"/>
    <property type="match status" value="1"/>
</dbReference>
<dbReference type="PROSITE" id="PS00503">
    <property type="entry name" value="PECTINESTERASE_2"/>
    <property type="match status" value="1"/>
</dbReference>
<comment type="function">
    <text evidence="1">Acts in the modification of cell walls via demethylesterification of cell wall pectin.</text>
</comment>
<comment type="catalytic activity">
    <reaction>
        <text>[(1-&gt;4)-alpha-D-galacturonosyl methyl ester](n) + n H2O = [(1-&gt;4)-alpha-D-galacturonosyl](n) + n methanol + n H(+)</text>
        <dbReference type="Rhea" id="RHEA:22380"/>
        <dbReference type="Rhea" id="RHEA-COMP:14570"/>
        <dbReference type="Rhea" id="RHEA-COMP:14573"/>
        <dbReference type="ChEBI" id="CHEBI:15377"/>
        <dbReference type="ChEBI" id="CHEBI:15378"/>
        <dbReference type="ChEBI" id="CHEBI:17790"/>
        <dbReference type="ChEBI" id="CHEBI:140522"/>
        <dbReference type="ChEBI" id="CHEBI:140523"/>
        <dbReference type="EC" id="3.1.1.11"/>
    </reaction>
</comment>
<comment type="pathway">
    <text>Glycan metabolism; pectin degradation; 2-dehydro-3-deoxy-D-gluconate from pectin: step 1/5.</text>
</comment>
<comment type="subcellular location">
    <subcellularLocation>
        <location evidence="1">Secreted</location>
        <location evidence="1">Cell wall</location>
    </subcellularLocation>
</comment>
<comment type="tissue specificity">
    <text evidence="4 5">Expressed in rosette leaves, flower and siliques.</text>
</comment>
<comment type="developmental stage">
    <text evidence="4">Low expression in vegetative and flower stages. No expression in young siliques but highly expressed in older siliques.</text>
</comment>
<comment type="miscellaneous">
    <text>The PMEI region may act as an autoinhibitory domain and prevent untimely PME activity during transport.</text>
</comment>
<comment type="similarity">
    <text evidence="6">In the N-terminal section; belongs to the PMEI family.</text>
</comment>
<comment type="similarity">
    <text evidence="6">In the C-terminal section; belongs to the pectinesterase family.</text>
</comment>
<accession>O49298</accession>
<name>PME6_ARATH</name>
<evidence type="ECO:0000250" key="1"/>
<evidence type="ECO:0000255" key="2"/>
<evidence type="ECO:0000255" key="3">
    <source>
        <dbReference type="PROSITE-ProRule" id="PRU10040"/>
    </source>
</evidence>
<evidence type="ECO:0000269" key="4">
    <source>
    </source>
</evidence>
<evidence type="ECO:0000269" key="5">
    <source>
    </source>
</evidence>
<evidence type="ECO:0000305" key="6"/>
<feature type="signal peptide" evidence="2">
    <location>
        <begin position="1"/>
        <end position="32"/>
    </location>
</feature>
<feature type="chain" id="PRO_0000371663" description="Probable pectinesterase/pectinesterase inhibitor 6">
    <location>
        <begin position="33"/>
        <end position="554"/>
    </location>
</feature>
<feature type="region of interest" description="Pectinesterase inhibitor 6">
    <location>
        <begin position="29"/>
        <end position="183"/>
    </location>
</feature>
<feature type="region of interest" description="Pectinesterase 6">
    <location>
        <begin position="250"/>
        <end position="540"/>
    </location>
</feature>
<feature type="active site" description="Proton donor; for pectinesterase activity" evidence="3">
    <location>
        <position position="380"/>
    </location>
</feature>
<feature type="active site" description="Nucleophile; for pectinesterase activity" evidence="3">
    <location>
        <position position="401"/>
    </location>
</feature>
<feature type="binding site" evidence="1">
    <location>
        <position position="327"/>
    </location>
    <ligand>
        <name>substrate</name>
        <note>for pectinesterase activity</note>
    </ligand>
</feature>
<feature type="binding site" evidence="1">
    <location>
        <position position="357"/>
    </location>
    <ligand>
        <name>substrate</name>
        <note>for pectinesterase activity</note>
    </ligand>
</feature>
<feature type="binding site" evidence="1">
    <location>
        <position position="460"/>
    </location>
    <ligand>
        <name>substrate</name>
        <note>for pectinesterase activity</note>
    </ligand>
</feature>
<feature type="binding site" evidence="1">
    <location>
        <position position="462"/>
    </location>
    <ligand>
        <name>substrate</name>
        <note>for pectinesterase activity</note>
    </ligand>
</feature>
<feature type="site" description="Transition state stabilizer" evidence="1">
    <location>
        <position position="379"/>
    </location>
</feature>
<feature type="glycosylation site" description="N-linked (GlcNAc...) asparagine" evidence="2">
    <location>
        <position position="119"/>
    </location>
</feature>
<feature type="glycosylation site" description="N-linked (GlcNAc...) asparagine" evidence="2">
    <location>
        <position position="172"/>
    </location>
</feature>
<feature type="disulfide bond" evidence="1">
    <location>
        <begin position="394"/>
        <end position="414"/>
    </location>
</feature>
<reference key="1">
    <citation type="journal article" date="2000" name="Nature">
        <title>Sequence and analysis of chromosome 1 of the plant Arabidopsis thaliana.</title>
        <authorList>
            <person name="Theologis A."/>
            <person name="Ecker J.R."/>
            <person name="Palm C.J."/>
            <person name="Federspiel N.A."/>
            <person name="Kaul S."/>
            <person name="White O."/>
            <person name="Alonso J."/>
            <person name="Altafi H."/>
            <person name="Araujo R."/>
            <person name="Bowman C.L."/>
            <person name="Brooks S.Y."/>
            <person name="Buehler E."/>
            <person name="Chan A."/>
            <person name="Chao Q."/>
            <person name="Chen H."/>
            <person name="Cheuk R.F."/>
            <person name="Chin C.W."/>
            <person name="Chung M.K."/>
            <person name="Conn L."/>
            <person name="Conway A.B."/>
            <person name="Conway A.R."/>
            <person name="Creasy T.H."/>
            <person name="Dewar K."/>
            <person name="Dunn P."/>
            <person name="Etgu P."/>
            <person name="Feldblyum T.V."/>
            <person name="Feng J.-D."/>
            <person name="Fong B."/>
            <person name="Fujii C.Y."/>
            <person name="Gill J.E."/>
            <person name="Goldsmith A.D."/>
            <person name="Haas B."/>
            <person name="Hansen N.F."/>
            <person name="Hughes B."/>
            <person name="Huizar L."/>
            <person name="Hunter J.L."/>
            <person name="Jenkins J."/>
            <person name="Johnson-Hopson C."/>
            <person name="Khan S."/>
            <person name="Khaykin E."/>
            <person name="Kim C.J."/>
            <person name="Koo H.L."/>
            <person name="Kremenetskaia I."/>
            <person name="Kurtz D.B."/>
            <person name="Kwan A."/>
            <person name="Lam B."/>
            <person name="Langin-Hooper S."/>
            <person name="Lee A."/>
            <person name="Lee J.M."/>
            <person name="Lenz C.A."/>
            <person name="Li J.H."/>
            <person name="Li Y.-P."/>
            <person name="Lin X."/>
            <person name="Liu S.X."/>
            <person name="Liu Z.A."/>
            <person name="Luros J.S."/>
            <person name="Maiti R."/>
            <person name="Marziali A."/>
            <person name="Militscher J."/>
            <person name="Miranda M."/>
            <person name="Nguyen M."/>
            <person name="Nierman W.C."/>
            <person name="Osborne B.I."/>
            <person name="Pai G."/>
            <person name="Peterson J."/>
            <person name="Pham P.K."/>
            <person name="Rizzo M."/>
            <person name="Rooney T."/>
            <person name="Rowley D."/>
            <person name="Sakano H."/>
            <person name="Salzberg S.L."/>
            <person name="Schwartz J.R."/>
            <person name="Shinn P."/>
            <person name="Southwick A.M."/>
            <person name="Sun H."/>
            <person name="Tallon L.J."/>
            <person name="Tambunga G."/>
            <person name="Toriumi M.J."/>
            <person name="Town C.D."/>
            <person name="Utterback T."/>
            <person name="Van Aken S."/>
            <person name="Vaysberg M."/>
            <person name="Vysotskaia V.S."/>
            <person name="Walker M."/>
            <person name="Wu D."/>
            <person name="Yu G."/>
            <person name="Fraser C.M."/>
            <person name="Venter J.C."/>
            <person name="Davis R.W."/>
        </authorList>
    </citation>
    <scope>NUCLEOTIDE SEQUENCE [LARGE SCALE GENOMIC DNA]</scope>
    <source>
        <strain>cv. Columbia</strain>
    </source>
</reference>
<reference key="2">
    <citation type="journal article" date="2017" name="Plant J.">
        <title>Araport11: a complete reannotation of the Arabidopsis thaliana reference genome.</title>
        <authorList>
            <person name="Cheng C.Y."/>
            <person name="Krishnakumar V."/>
            <person name="Chan A.P."/>
            <person name="Thibaud-Nissen F."/>
            <person name="Schobel S."/>
            <person name="Town C.D."/>
        </authorList>
    </citation>
    <scope>GENOME REANNOTATION</scope>
    <source>
        <strain>cv. Columbia</strain>
    </source>
</reference>
<reference key="3">
    <citation type="journal article" date="2003" name="Science">
        <title>Empirical analysis of transcriptional activity in the Arabidopsis genome.</title>
        <authorList>
            <person name="Yamada K."/>
            <person name="Lim J."/>
            <person name="Dale J.M."/>
            <person name="Chen H."/>
            <person name="Shinn P."/>
            <person name="Palm C.J."/>
            <person name="Southwick A.M."/>
            <person name="Wu H.C."/>
            <person name="Kim C.J."/>
            <person name="Nguyen M."/>
            <person name="Pham P.K."/>
            <person name="Cheuk R.F."/>
            <person name="Karlin-Newmann G."/>
            <person name="Liu S.X."/>
            <person name="Lam B."/>
            <person name="Sakano H."/>
            <person name="Wu T."/>
            <person name="Yu G."/>
            <person name="Miranda M."/>
            <person name="Quach H.L."/>
            <person name="Tripp M."/>
            <person name="Chang C.H."/>
            <person name="Lee J.M."/>
            <person name="Toriumi M.J."/>
            <person name="Chan M.M."/>
            <person name="Tang C.C."/>
            <person name="Onodera C.S."/>
            <person name="Deng J.M."/>
            <person name="Akiyama K."/>
            <person name="Ansari Y."/>
            <person name="Arakawa T."/>
            <person name="Banh J."/>
            <person name="Banno F."/>
            <person name="Bowser L."/>
            <person name="Brooks S.Y."/>
            <person name="Carninci P."/>
            <person name="Chao Q."/>
            <person name="Choy N."/>
            <person name="Enju A."/>
            <person name="Goldsmith A.D."/>
            <person name="Gurjal M."/>
            <person name="Hansen N.F."/>
            <person name="Hayashizaki Y."/>
            <person name="Johnson-Hopson C."/>
            <person name="Hsuan V.W."/>
            <person name="Iida K."/>
            <person name="Karnes M."/>
            <person name="Khan S."/>
            <person name="Koesema E."/>
            <person name="Ishida J."/>
            <person name="Jiang P.X."/>
            <person name="Jones T."/>
            <person name="Kawai J."/>
            <person name="Kamiya A."/>
            <person name="Meyers C."/>
            <person name="Nakajima M."/>
            <person name="Narusaka M."/>
            <person name="Seki M."/>
            <person name="Sakurai T."/>
            <person name="Satou M."/>
            <person name="Tamse R."/>
            <person name="Vaysberg M."/>
            <person name="Wallender E.K."/>
            <person name="Wong C."/>
            <person name="Yamamura Y."/>
            <person name="Yuan S."/>
            <person name="Shinozaki K."/>
            <person name="Davis R.W."/>
            <person name="Theologis A."/>
            <person name="Ecker J.R."/>
        </authorList>
    </citation>
    <scope>NUCLEOTIDE SEQUENCE [LARGE SCALE MRNA]</scope>
    <source>
        <strain>cv. Columbia</strain>
    </source>
</reference>
<reference key="4">
    <citation type="submission" date="2006-07" db="EMBL/GenBank/DDBJ databases">
        <title>Large-scale analysis of RIKEN Arabidopsis full-length (RAFL) cDNAs.</title>
        <authorList>
            <person name="Totoki Y."/>
            <person name="Seki M."/>
            <person name="Ishida J."/>
            <person name="Nakajima M."/>
            <person name="Enju A."/>
            <person name="Kamiya A."/>
            <person name="Narusaka M."/>
            <person name="Shin-i T."/>
            <person name="Nakagawa M."/>
            <person name="Sakamoto N."/>
            <person name="Oishi K."/>
            <person name="Kohara Y."/>
            <person name="Kobayashi M."/>
            <person name="Toyoda A."/>
            <person name="Sakaki Y."/>
            <person name="Sakurai T."/>
            <person name="Iida K."/>
            <person name="Akiyama K."/>
            <person name="Satou M."/>
            <person name="Toyoda T."/>
            <person name="Konagaya A."/>
            <person name="Carninci P."/>
            <person name="Kawai J."/>
            <person name="Hayashizaki Y."/>
            <person name="Shinozaki K."/>
        </authorList>
    </citation>
    <scope>NUCLEOTIDE SEQUENCE [LARGE SCALE MRNA]</scope>
    <source>
        <strain>cv. Columbia</strain>
    </source>
</reference>
<reference key="5">
    <citation type="journal article" date="1998" name="Gene">
        <title>Characterization of the pectin methylesterase-like gene AtPME3: a new member of a gene family comprising at least 12 genes in Arabidopsis thaliana.</title>
        <authorList>
            <person name="Micheli F."/>
            <person name="Holliger C."/>
            <person name="Goldberg R."/>
            <person name="Richard L."/>
        </authorList>
    </citation>
    <scope>TISSUE SPECIFICITY</scope>
</reference>
<reference key="6">
    <citation type="journal article" date="2004" name="Carbohydr. Res.">
        <title>Pectin methylesterases: sequence-structural features and phylogenetic relationships.</title>
        <authorList>
            <person name="Markovic O."/>
            <person name="Janecek S."/>
        </authorList>
    </citation>
    <scope>GENE FAMILY</scope>
    <scope>NOMENCLATURE</scope>
</reference>
<reference key="7">
    <citation type="journal article" date="2006" name="Planta">
        <title>Comprehensive expression profiling of the pectin methylesterase gene family during silique development in Arabidopsis thaliana.</title>
        <authorList>
            <person name="Louvet R."/>
            <person name="Cavel E."/>
            <person name="Gutierrez L."/>
            <person name="Guenin S."/>
            <person name="Roger D."/>
            <person name="Gillet F."/>
            <person name="Guerineau F."/>
            <person name="Pelloux J."/>
        </authorList>
    </citation>
    <scope>TISSUE SPECIFICITY</scope>
    <scope>DEVELOPMENTAL STAGE</scope>
</reference>
<organism>
    <name type="scientific">Arabidopsis thaliana</name>
    <name type="common">Mouse-ear cress</name>
    <dbReference type="NCBI Taxonomy" id="3702"/>
    <lineage>
        <taxon>Eukaryota</taxon>
        <taxon>Viridiplantae</taxon>
        <taxon>Streptophyta</taxon>
        <taxon>Embryophyta</taxon>
        <taxon>Tracheophyta</taxon>
        <taxon>Spermatophyta</taxon>
        <taxon>Magnoliopsida</taxon>
        <taxon>eudicotyledons</taxon>
        <taxon>Gunneridae</taxon>
        <taxon>Pentapetalae</taxon>
        <taxon>rosids</taxon>
        <taxon>malvids</taxon>
        <taxon>Brassicales</taxon>
        <taxon>Brassicaceae</taxon>
        <taxon>Camelineae</taxon>
        <taxon>Arabidopsis</taxon>
    </lineage>
</organism>
<keyword id="KW-0063">Aspartyl esterase</keyword>
<keyword id="KW-0134">Cell wall</keyword>
<keyword id="KW-0961">Cell wall biogenesis/degradation</keyword>
<keyword id="KW-1015">Disulfide bond</keyword>
<keyword id="KW-0325">Glycoprotein</keyword>
<keyword id="KW-0378">Hydrolase</keyword>
<keyword id="KW-1185">Reference proteome</keyword>
<keyword id="KW-0964">Secreted</keyword>
<keyword id="KW-0732">Signal</keyword>
<protein>
    <recommendedName>
        <fullName>Probable pectinesterase/pectinesterase inhibitor 6</fullName>
    </recommendedName>
    <domain>
        <recommendedName>
            <fullName>Pectinesterase inhibitor 6</fullName>
        </recommendedName>
        <alternativeName>
            <fullName>Pectin methylesterase inhibitor 6</fullName>
        </alternativeName>
    </domain>
    <domain>
        <recommendedName>
            <fullName>Pectinesterase 6</fullName>
            <shortName>PE 6</shortName>
            <ecNumber>3.1.1.11</ecNumber>
        </recommendedName>
        <alternativeName>
            <fullName>Pectin methylesterase 6</fullName>
            <shortName>AtPME6</shortName>
        </alternativeName>
    </domain>
</protein>
<proteinExistence type="evidence at transcript level"/>